<evidence type="ECO:0000255" key="1">
    <source>
        <dbReference type="PROSITE-ProRule" id="PRU00532"/>
    </source>
</evidence>
<evidence type="ECO:0000269" key="2">
    <source>
    </source>
</evidence>
<evidence type="ECO:0000305" key="3"/>
<reference key="1">
    <citation type="journal article" date="2006" name="Arch. Microbiol.">
        <title>Characterization of the ectoine biosynthesis genes of haloalkalotolerant obligate methanotroph 'Methylomicrobium alcaliphilum 20Z'.</title>
        <authorList>
            <person name="Reshetnikov A.S."/>
            <person name="Khmelenina V.N."/>
            <person name="Trotsenko Y.A."/>
        </authorList>
    </citation>
    <scope>NUCLEOTIDE SEQUENCE [GENOMIC DNA]</scope>
    <scope>CATALYTIC ACTIVITY</scope>
    <scope>BIOPHYSICOCHEMICAL PROPERTIES</scope>
    <scope>SUBUNIT</scope>
    <source>
        <strain>DSM 19304 / NCIMB 14124 / VKM B-2133 / 20Z</strain>
    </source>
</reference>
<reference key="2">
    <citation type="journal article" date="2012" name="J. Bacteriol.">
        <title>Genome sequence of the haloalkaliphilic methanotrophic bacterium Methylomicrobium alcaliphilum 20Z.</title>
        <authorList>
            <person name="Vuilleumier S."/>
            <person name="Khmelenina V.N."/>
            <person name="Bringel F."/>
            <person name="Reshetnikov A.S."/>
            <person name="Lajus A."/>
            <person name="Mangenot S."/>
            <person name="Rouy Z."/>
            <person name="Op den Camp H.J."/>
            <person name="Jetten M.S."/>
            <person name="Dispirito A.A."/>
            <person name="Dunfield P."/>
            <person name="Klotz M.G."/>
            <person name="Semrau J.D."/>
            <person name="Stein L.Y."/>
            <person name="Barbe V."/>
            <person name="Medigue C."/>
            <person name="Trotsenko Y.A."/>
            <person name="Kalyuzhnaya M.G."/>
        </authorList>
    </citation>
    <scope>NUCLEOTIDE SEQUENCE [LARGE SCALE GENOMIC DNA]</scope>
    <source>
        <strain>DSM 19304 / NCIMB 14124 / VKM B-2133 / 20Z</strain>
    </source>
</reference>
<proteinExistence type="evidence at protein level"/>
<gene>
    <name type="primary">ectA</name>
    <name type="ordered locus">MEALZ_3250</name>
</gene>
<organism>
    <name type="scientific">Methylotuvimicrobium alcaliphilum (strain DSM 19304 / NCIMB 14124 / VKM B-2133 / 20Z)</name>
    <name type="common">Methylomicrobium alcaliphilum</name>
    <dbReference type="NCBI Taxonomy" id="1091494"/>
    <lineage>
        <taxon>Bacteria</taxon>
        <taxon>Pseudomonadati</taxon>
        <taxon>Pseudomonadota</taxon>
        <taxon>Gammaproteobacteria</taxon>
        <taxon>Methylococcales</taxon>
        <taxon>Methylococcaceae</taxon>
        <taxon>Methylotuvimicrobium</taxon>
    </lineage>
</organism>
<protein>
    <recommendedName>
        <fullName>L-2,4-diaminobutyric acid acetyltransferase</fullName>
        <shortName>DABA acetyltransferase</shortName>
        <ecNumber>2.3.1.178</ecNumber>
    </recommendedName>
</protein>
<keyword id="KW-0012">Acyltransferase</keyword>
<keyword id="KW-1185">Reference proteome</keyword>
<keyword id="KW-0808">Transferase</keyword>
<accession>Q4JQJ5</accession>
<accession>G4T4A4</accession>
<feature type="chain" id="PRO_0000308172" description="L-2,4-diaminobutyric acid acetyltransferase">
    <location>
        <begin position="1"/>
        <end position="172"/>
    </location>
</feature>
<feature type="domain" description="N-acetyltransferase" evidence="1">
    <location>
        <begin position="11"/>
        <end position="165"/>
    </location>
</feature>
<dbReference type="EC" id="2.3.1.178"/>
<dbReference type="EMBL" id="DQ016501">
    <property type="protein sequence ID" value="AAY96770.1"/>
    <property type="molecule type" value="Genomic_DNA"/>
</dbReference>
<dbReference type="EMBL" id="FO082060">
    <property type="protein sequence ID" value="CCE24915.1"/>
    <property type="molecule type" value="Genomic_DNA"/>
</dbReference>
<dbReference type="RefSeq" id="WP_014149673.1">
    <property type="nucleotide sequence ID" value="NC_016112.1"/>
</dbReference>
<dbReference type="SMR" id="Q4JQJ5"/>
<dbReference type="STRING" id="1091494.MEALZ_3250"/>
<dbReference type="KEGG" id="mah:MEALZ_3250"/>
<dbReference type="PATRIC" id="fig|271065.3.peg.3344"/>
<dbReference type="HOGENOM" id="CLU_111896_0_0_6"/>
<dbReference type="UniPathway" id="UPA00067">
    <property type="reaction ID" value="UER00122"/>
</dbReference>
<dbReference type="Proteomes" id="UP000008315">
    <property type="component" value="Chromosome"/>
</dbReference>
<dbReference type="GO" id="GO:0033816">
    <property type="term" value="F:diaminobutyrate acetyltransferase activity"/>
    <property type="evidence" value="ECO:0007669"/>
    <property type="project" value="UniProtKB-EC"/>
</dbReference>
<dbReference type="GO" id="GO:0019491">
    <property type="term" value="P:ectoine biosynthetic process"/>
    <property type="evidence" value="ECO:0007669"/>
    <property type="project" value="UniProtKB-UniPathway"/>
</dbReference>
<dbReference type="CDD" id="cd04301">
    <property type="entry name" value="NAT_SF"/>
    <property type="match status" value="1"/>
</dbReference>
<dbReference type="Gene3D" id="3.40.630.30">
    <property type="match status" value="1"/>
</dbReference>
<dbReference type="InterPro" id="IPR016181">
    <property type="entry name" value="Acyl_CoA_acyltransferase"/>
</dbReference>
<dbReference type="InterPro" id="IPR012772">
    <property type="entry name" value="Ectoine_EctA"/>
</dbReference>
<dbReference type="InterPro" id="IPR000182">
    <property type="entry name" value="GNAT_dom"/>
</dbReference>
<dbReference type="NCBIfam" id="TIGR02406">
    <property type="entry name" value="ectoine_EctA"/>
    <property type="match status" value="1"/>
</dbReference>
<dbReference type="Pfam" id="PF00583">
    <property type="entry name" value="Acetyltransf_1"/>
    <property type="match status" value="1"/>
</dbReference>
<dbReference type="SUPFAM" id="SSF55729">
    <property type="entry name" value="Acyl-CoA N-acyltransferases (Nat)"/>
    <property type="match status" value="1"/>
</dbReference>
<dbReference type="PROSITE" id="PS51186">
    <property type="entry name" value="GNAT"/>
    <property type="match status" value="1"/>
</dbReference>
<sequence length="172" mass="18883">MLPDKTALPIITLSQPTAEVGAQVHRLISKCPPLDPNSMYCNLLQSSHFSETAVAAKIGDELVGFVSGYRIPQRPDTLFVWQVAVGEKARGQGLATRMLKAILARPVNQDINRIETTITPNNKASWALFEGLAKKLDTQIGSAVMFDKTRHFADQHETEMLVKVGPFKAVQA</sequence>
<comment type="function">
    <text>Catalyzes the acetylation of L-2,4-diaminobutyrate (DABA) to gamma-N-acetyl-alpha,gamma-diaminobutyric acid (ADABA) with acetyl coenzyme A.</text>
</comment>
<comment type="catalytic activity">
    <reaction evidence="2">
        <text>L-2,4-diaminobutanoate + acetyl-CoA = (2S)-4-acetamido-2-aminobutanoate + CoA + H(+)</text>
        <dbReference type="Rhea" id="RHEA:16901"/>
        <dbReference type="ChEBI" id="CHEBI:15378"/>
        <dbReference type="ChEBI" id="CHEBI:57287"/>
        <dbReference type="ChEBI" id="CHEBI:57288"/>
        <dbReference type="ChEBI" id="CHEBI:58761"/>
        <dbReference type="ChEBI" id="CHEBI:58929"/>
        <dbReference type="EC" id="2.3.1.178"/>
    </reaction>
</comment>
<comment type="activity regulation">
    <text>Inhibited by zinc and cadmium.</text>
</comment>
<comment type="biophysicochemical properties">
    <kinetics>
        <KM evidence="2">400 uM for L-2,4-diaminobutanoate</KM>
        <KM evidence="2">36.6 uM for acetyl-CoA</KM>
    </kinetics>
    <phDependence>
        <text evidence="2">Optimum pH is 9.5.</text>
    </phDependence>
    <temperatureDependence>
        <text evidence="2">Optimum temperature is 20 degrees Celsius.</text>
    </temperatureDependence>
</comment>
<comment type="pathway">
    <text>Amine and polyamine biosynthesis; ectoine biosynthesis; L-ectoine from L-aspartate 4-semialdehyde: step 2/3.</text>
</comment>
<comment type="subunit">
    <text evidence="2">Homodimer.</text>
</comment>
<comment type="similarity">
    <text evidence="3">Belongs to the acetyltransferase family. EctA subfamily.</text>
</comment>
<name>ECTA_META2</name>